<evidence type="ECO:0000255" key="1">
    <source>
        <dbReference type="HAMAP-Rule" id="MF_00377"/>
    </source>
</evidence>
<evidence type="ECO:0000256" key="2">
    <source>
        <dbReference type="SAM" id="MobiDB-lite"/>
    </source>
</evidence>
<evidence type="ECO:0000269" key="3">
    <source>
    </source>
</evidence>
<evidence type="ECO:0000305" key="4"/>
<name>DNAA_PROMA</name>
<comment type="function">
    <text evidence="1">Plays an essential role in the initiation and regulation of chromosomal replication. ATP-DnaA binds to the origin of replication (oriC) to initiate formation of the DNA replication initiation complex once per cell cycle. Binds the DnaA box (a 9 base pair repeat at the origin) and separates the double-stranded (ds)DNA. Forms a right-handed helical filament on oriC DNA; dsDNA binds to the exterior of the filament while single-stranded (ss)DNA is stabiized in the filament's interior. The ATP-DnaA-oriC complex binds and stabilizes one strand of the AT-rich DNA unwinding element (DUE), permitting loading of DNA polymerase. After initiation quickly degrades to an ADP-DnaA complex that is not apt for DNA replication. Binds acidic phospholipids.</text>
</comment>
<comment type="function">
    <text evidence="3">Isolated domain IV (residues 363-461) binds both E.coli and B.subtilis oriC.</text>
</comment>
<comment type="subunit">
    <text evidence="1">Oligomerizes as a right-handed, spiral filament on DNA at oriC.</text>
</comment>
<comment type="subcellular location">
    <subcellularLocation>
        <location evidence="1">Cytoplasm</location>
    </subcellularLocation>
</comment>
<comment type="domain">
    <text evidence="1">Domain I is involved in oligomerization and binding regulators, domain II is flexibile and of varying length in different bacteria, domain III forms the AAA+ region, while domain IV binds dsDNA.</text>
</comment>
<comment type="similarity">
    <text evidence="1 4">Belongs to the DnaA family.</text>
</comment>
<reference key="1">
    <citation type="journal article" date="1998" name="Mol. Gen. Genet.">
        <title>Unique organization of the dnaA region from Prochlorococcus marinus CCMP1375, a marine cyanobacterium.</title>
        <authorList>
            <person name="Richter S."/>
            <person name="Hess W.R."/>
            <person name="Krause M."/>
            <person name="Messer W."/>
        </authorList>
    </citation>
    <scope>NUCLEOTIDE SEQUENCE [GENOMIC DNA]</scope>
    <scope>DOMAIN</scope>
    <scope>DNA-BINDING</scope>
    <source>
        <strain>SARG / CCMP1375 / SS120</strain>
    </source>
</reference>
<reference key="2">
    <citation type="journal article" date="2003" name="Proc. Natl. Acad. Sci. U.S.A.">
        <title>Genome sequence of the cyanobacterium Prochlorococcus marinus SS120, a nearly minimal oxyphototrophic genome.</title>
        <authorList>
            <person name="Dufresne A."/>
            <person name="Salanoubat M."/>
            <person name="Partensky F."/>
            <person name="Artiguenave F."/>
            <person name="Axmann I.M."/>
            <person name="Barbe V."/>
            <person name="Duprat S."/>
            <person name="Galperin M.Y."/>
            <person name="Koonin E.V."/>
            <person name="Le Gall F."/>
            <person name="Makarova K.S."/>
            <person name="Ostrowski M."/>
            <person name="Oztas S."/>
            <person name="Robert C."/>
            <person name="Rogozin I.B."/>
            <person name="Scanlan D.J."/>
            <person name="Tandeau de Marsac N."/>
            <person name="Weissenbach J."/>
            <person name="Wincker P."/>
            <person name="Wolf Y.I."/>
            <person name="Hess W.R."/>
        </authorList>
    </citation>
    <scope>NUCLEOTIDE SEQUENCE [LARGE SCALE GENOMIC DNA]</scope>
    <source>
        <strain>SARG / CCMP1375 / SS120</strain>
    </source>
</reference>
<dbReference type="EMBL" id="U44977">
    <property type="protein sequence ID" value="AAC15822.1"/>
    <property type="molecule type" value="Genomic_DNA"/>
</dbReference>
<dbReference type="EMBL" id="AE017126">
    <property type="protein sequence ID" value="AAP99612.1"/>
    <property type="molecule type" value="Genomic_DNA"/>
</dbReference>
<dbReference type="PIR" id="T52496">
    <property type="entry name" value="T52496"/>
</dbReference>
<dbReference type="RefSeq" id="NP_874960.1">
    <property type="nucleotide sequence ID" value="NC_005042.1"/>
</dbReference>
<dbReference type="RefSeq" id="WP_011124720.1">
    <property type="nucleotide sequence ID" value="NC_005042.1"/>
</dbReference>
<dbReference type="SMR" id="Q51896"/>
<dbReference type="STRING" id="167539.Pro_0567"/>
<dbReference type="EnsemblBacteria" id="AAP99612">
    <property type="protein sequence ID" value="AAP99612"/>
    <property type="gene ID" value="Pro_0567"/>
</dbReference>
<dbReference type="KEGG" id="pma:Pro_0567"/>
<dbReference type="PATRIC" id="fig|167539.5.peg.582"/>
<dbReference type="eggNOG" id="COG0593">
    <property type="taxonomic scope" value="Bacteria"/>
</dbReference>
<dbReference type="HOGENOM" id="CLU_026910_3_1_3"/>
<dbReference type="OrthoDB" id="9807019at2"/>
<dbReference type="Proteomes" id="UP000001420">
    <property type="component" value="Chromosome"/>
</dbReference>
<dbReference type="GO" id="GO:0005737">
    <property type="term" value="C:cytoplasm"/>
    <property type="evidence" value="ECO:0007669"/>
    <property type="project" value="UniProtKB-SubCell"/>
</dbReference>
<dbReference type="GO" id="GO:0005886">
    <property type="term" value="C:plasma membrane"/>
    <property type="evidence" value="ECO:0007669"/>
    <property type="project" value="TreeGrafter"/>
</dbReference>
<dbReference type="GO" id="GO:0005524">
    <property type="term" value="F:ATP binding"/>
    <property type="evidence" value="ECO:0007669"/>
    <property type="project" value="UniProtKB-UniRule"/>
</dbReference>
<dbReference type="GO" id="GO:0016887">
    <property type="term" value="F:ATP hydrolysis activity"/>
    <property type="evidence" value="ECO:0007669"/>
    <property type="project" value="InterPro"/>
</dbReference>
<dbReference type="GO" id="GO:0003688">
    <property type="term" value="F:DNA replication origin binding"/>
    <property type="evidence" value="ECO:0007669"/>
    <property type="project" value="UniProtKB-UniRule"/>
</dbReference>
<dbReference type="GO" id="GO:0008289">
    <property type="term" value="F:lipid binding"/>
    <property type="evidence" value="ECO:0007669"/>
    <property type="project" value="UniProtKB-KW"/>
</dbReference>
<dbReference type="GO" id="GO:0006270">
    <property type="term" value="P:DNA replication initiation"/>
    <property type="evidence" value="ECO:0007669"/>
    <property type="project" value="UniProtKB-UniRule"/>
</dbReference>
<dbReference type="GO" id="GO:0006275">
    <property type="term" value="P:regulation of DNA replication"/>
    <property type="evidence" value="ECO:0007669"/>
    <property type="project" value="UniProtKB-UniRule"/>
</dbReference>
<dbReference type="CDD" id="cd00009">
    <property type="entry name" value="AAA"/>
    <property type="match status" value="1"/>
</dbReference>
<dbReference type="CDD" id="cd06571">
    <property type="entry name" value="Bac_DnaA_C"/>
    <property type="match status" value="1"/>
</dbReference>
<dbReference type="FunFam" id="3.40.50.300:FF:000668">
    <property type="entry name" value="Chromosomal replication initiator protein DnaA"/>
    <property type="match status" value="1"/>
</dbReference>
<dbReference type="Gene3D" id="1.10.1750.10">
    <property type="match status" value="1"/>
</dbReference>
<dbReference type="Gene3D" id="1.10.8.60">
    <property type="match status" value="1"/>
</dbReference>
<dbReference type="Gene3D" id="3.30.300.180">
    <property type="match status" value="1"/>
</dbReference>
<dbReference type="Gene3D" id="3.40.50.300">
    <property type="entry name" value="P-loop containing nucleotide triphosphate hydrolases"/>
    <property type="match status" value="1"/>
</dbReference>
<dbReference type="HAMAP" id="MF_00377">
    <property type="entry name" value="DnaA_bact"/>
    <property type="match status" value="1"/>
</dbReference>
<dbReference type="InterPro" id="IPR003593">
    <property type="entry name" value="AAA+_ATPase"/>
</dbReference>
<dbReference type="InterPro" id="IPR001957">
    <property type="entry name" value="Chromosome_initiator_DnaA"/>
</dbReference>
<dbReference type="InterPro" id="IPR020591">
    <property type="entry name" value="Chromosome_initiator_DnaA-like"/>
</dbReference>
<dbReference type="InterPro" id="IPR018312">
    <property type="entry name" value="Chromosome_initiator_DnaA_CS"/>
</dbReference>
<dbReference type="InterPro" id="IPR013159">
    <property type="entry name" value="DnaA_C"/>
</dbReference>
<dbReference type="InterPro" id="IPR013317">
    <property type="entry name" value="DnaA_dom"/>
</dbReference>
<dbReference type="InterPro" id="IPR024633">
    <property type="entry name" value="DnaA_N_dom"/>
</dbReference>
<dbReference type="InterPro" id="IPR038454">
    <property type="entry name" value="DnaA_N_sf"/>
</dbReference>
<dbReference type="InterPro" id="IPR027417">
    <property type="entry name" value="P-loop_NTPase"/>
</dbReference>
<dbReference type="InterPro" id="IPR010921">
    <property type="entry name" value="Trp_repressor/repl_initiator"/>
</dbReference>
<dbReference type="NCBIfam" id="TIGR00362">
    <property type="entry name" value="DnaA"/>
    <property type="match status" value="1"/>
</dbReference>
<dbReference type="PANTHER" id="PTHR30050">
    <property type="entry name" value="CHROMOSOMAL REPLICATION INITIATOR PROTEIN DNAA"/>
    <property type="match status" value="1"/>
</dbReference>
<dbReference type="PANTHER" id="PTHR30050:SF2">
    <property type="entry name" value="CHROMOSOMAL REPLICATION INITIATOR PROTEIN DNAA"/>
    <property type="match status" value="1"/>
</dbReference>
<dbReference type="Pfam" id="PF00308">
    <property type="entry name" value="Bac_DnaA"/>
    <property type="match status" value="1"/>
</dbReference>
<dbReference type="Pfam" id="PF08299">
    <property type="entry name" value="Bac_DnaA_C"/>
    <property type="match status" value="1"/>
</dbReference>
<dbReference type="Pfam" id="PF11638">
    <property type="entry name" value="DnaA_N"/>
    <property type="match status" value="1"/>
</dbReference>
<dbReference type="PRINTS" id="PR00051">
    <property type="entry name" value="DNAA"/>
</dbReference>
<dbReference type="SMART" id="SM00382">
    <property type="entry name" value="AAA"/>
    <property type="match status" value="1"/>
</dbReference>
<dbReference type="SMART" id="SM00760">
    <property type="entry name" value="Bac_DnaA_C"/>
    <property type="match status" value="1"/>
</dbReference>
<dbReference type="SUPFAM" id="SSF52540">
    <property type="entry name" value="P-loop containing nucleoside triphosphate hydrolases"/>
    <property type="match status" value="1"/>
</dbReference>
<dbReference type="SUPFAM" id="SSF48295">
    <property type="entry name" value="TrpR-like"/>
    <property type="match status" value="1"/>
</dbReference>
<dbReference type="PROSITE" id="PS01008">
    <property type="entry name" value="DNAA"/>
    <property type="match status" value="1"/>
</dbReference>
<feature type="chain" id="PRO_0000114233" description="Chromosomal replication initiator protein DnaA">
    <location>
        <begin position="1"/>
        <end position="461"/>
    </location>
</feature>
<feature type="region of interest" description="Domain I, interacts with DnaA modulators" evidence="1">
    <location>
        <begin position="1"/>
        <end position="85"/>
    </location>
</feature>
<feature type="region of interest" description="Domain II" evidence="1">
    <location>
        <begin position="85"/>
        <end position="120"/>
    </location>
</feature>
<feature type="region of interest" description="Disordered" evidence="2">
    <location>
        <begin position="85"/>
        <end position="109"/>
    </location>
</feature>
<feature type="region of interest" description="Domain III, AAA+ region" evidence="1">
    <location>
        <begin position="121"/>
        <end position="337"/>
    </location>
</feature>
<feature type="region of interest" description="Domain IV, binds dsDNA" evidence="1 3">
    <location>
        <begin position="338"/>
        <end position="461"/>
    </location>
</feature>
<feature type="binding site" evidence="1">
    <location>
        <position position="165"/>
    </location>
    <ligand>
        <name>ATP</name>
        <dbReference type="ChEBI" id="CHEBI:30616"/>
    </ligand>
</feature>
<feature type="binding site" evidence="1">
    <location>
        <position position="167"/>
    </location>
    <ligand>
        <name>ATP</name>
        <dbReference type="ChEBI" id="CHEBI:30616"/>
    </ligand>
</feature>
<feature type="binding site" evidence="1">
    <location>
        <position position="168"/>
    </location>
    <ligand>
        <name>ATP</name>
        <dbReference type="ChEBI" id="CHEBI:30616"/>
    </ligand>
</feature>
<feature type="binding site" evidence="1">
    <location>
        <position position="169"/>
    </location>
    <ligand>
        <name>ATP</name>
        <dbReference type="ChEBI" id="CHEBI:30616"/>
    </ligand>
</feature>
<feature type="sequence conflict" description="In Ref. 1; AAC15822." evidence="4" ref="1">
    <original>Q</original>
    <variation>H</variation>
    <location>
        <position position="302"/>
    </location>
</feature>
<keyword id="KW-0067">ATP-binding</keyword>
<keyword id="KW-0963">Cytoplasm</keyword>
<keyword id="KW-0235">DNA replication</keyword>
<keyword id="KW-0238">DNA-binding</keyword>
<keyword id="KW-0446">Lipid-binding</keyword>
<keyword id="KW-0547">Nucleotide-binding</keyword>
<keyword id="KW-1185">Reference proteome</keyword>
<accession>Q51896</accession>
<gene>
    <name evidence="1" type="primary">dnaA</name>
    <name type="ordered locus">Pro_0567</name>
</gene>
<protein>
    <recommendedName>
        <fullName evidence="1">Chromosomal replication initiator protein DnaA</fullName>
    </recommendedName>
</protein>
<organism>
    <name type="scientific">Prochlorococcus marinus (strain SARG / CCMP1375 / SS120)</name>
    <dbReference type="NCBI Taxonomy" id="167539"/>
    <lineage>
        <taxon>Bacteria</taxon>
        <taxon>Bacillati</taxon>
        <taxon>Cyanobacteriota</taxon>
        <taxon>Cyanophyceae</taxon>
        <taxon>Synechococcales</taxon>
        <taxon>Prochlorococcaceae</taxon>
        <taxon>Prochlorococcus</taxon>
    </lineage>
</organism>
<proteinExistence type="evidence at protein level"/>
<sequence length="461" mass="51403">MLEASWEKVQSSLKQNLSKPSYETWIRPTEFSGFKNGELTLIAPNSFSSAWLKNNYSQTIQETAEEIFGEPVTVHVKVKANAESSDEHYSSAPITPPLEASPGSVDSSGSSLRLSKKTLPLLNLRYVFNRFVVGPNSRMAHAAAMAVAESPGREFNPLFICGGVGLGKTHLMQAIGHYRLEIDPGAKVSYVSTETFTNDLILAIRQDRMQAFRDRYRAADLILVDDIQFIEGKEYTQEEFFHTFNALHDAGSQIVLASDRPPSQIPRLQERLMSRFSMGLIADVQAPDLETRMAILQKKAEQERVGLPRDLIQFIAGRFTSNIRELEGALTRAIAFASITGLPMTVDSIAPMLDPNGQGVEVTPKQVLDKVAEVFKVTPDEMRSASRRRPVSQARQVGMYLMRQGTNLSLPRIGDTFGGKDHTTVMYAIEQVEKKLSSDPQIASQVQKIRDLLQIDSRRKR</sequence>